<evidence type="ECO:0000255" key="1">
    <source>
        <dbReference type="HAMAP-Rule" id="MF_01151"/>
    </source>
</evidence>
<evidence type="ECO:0000256" key="2">
    <source>
        <dbReference type="SAM" id="MobiDB-lite"/>
    </source>
</evidence>
<feature type="chain" id="PRO_0000113812" description="Protein GrpE">
    <location>
        <begin position="1"/>
        <end position="157"/>
    </location>
</feature>
<feature type="region of interest" description="Disordered" evidence="2">
    <location>
        <begin position="1"/>
        <end position="21"/>
    </location>
</feature>
<feature type="compositionally biased region" description="Basic and acidic residues" evidence="2">
    <location>
        <begin position="1"/>
        <end position="10"/>
    </location>
</feature>
<sequence length="157" mass="17391">MQEENQHPEQDDISEAQDAGAAGSLDARIAELEAQLAEQQANVLYVKAEGENIRRRAAEDIDKARKFALEKFSSELLAVKDSLDAALVVENATVESYKSGVELTAKQLLSVFEKFHITEINPLGEKFDPNKHQAISMLESDQEPNSVISVLQNVRPE</sequence>
<gene>
    <name evidence="1" type="primary">grpE</name>
</gene>
<comment type="function">
    <text evidence="1">Participates actively in the response to hyperosmotic and heat shock by preventing the aggregation of stress-denatured proteins, in association with DnaK and GrpE. It is the nucleotide exchange factor for DnaK and may function as a thermosensor. Unfolded proteins bind initially to DnaJ; upon interaction with the DnaJ-bound protein, DnaK hydrolyzes its bound ATP, resulting in the formation of a stable complex. GrpE releases ADP from DnaK; ATP binding to DnaK triggers the release of the substrate protein, thus completing the reaction cycle. Several rounds of ATP-dependent interactions between DnaJ, DnaK and GrpE are required for fully efficient folding.</text>
</comment>
<comment type="subunit">
    <text evidence="1">Homodimer.</text>
</comment>
<comment type="subcellular location">
    <subcellularLocation>
        <location evidence="1">Cytoplasm</location>
    </subcellularLocation>
</comment>
<comment type="similarity">
    <text evidence="1">Belongs to the GrpE family.</text>
</comment>
<protein>
    <recommendedName>
        <fullName evidence="1">Protein GrpE</fullName>
    </recommendedName>
    <alternativeName>
        <fullName evidence="1">HSP-70 cofactor</fullName>
    </alternativeName>
</protein>
<organism>
    <name type="scientific">Methylovorus sp. (strain SS1 / DSM 11726)</name>
    <dbReference type="NCBI Taxonomy" id="81683"/>
    <lineage>
        <taxon>Bacteria</taxon>
        <taxon>Pseudomonadati</taxon>
        <taxon>Pseudomonadota</taxon>
        <taxon>Betaproteobacteria</taxon>
        <taxon>Nitrosomonadales</taxon>
        <taxon>Methylophilaceae</taxon>
        <taxon>Methylovorus</taxon>
    </lineage>
</organism>
<proteinExistence type="inferred from homology"/>
<reference key="1">
    <citation type="submission" date="1998-11" db="EMBL/GenBank/DDBJ databases">
        <title>grpE, dnaK, and dnaJ genes of Methylovorus sp. strain SS1 DSM11726.</title>
        <authorList>
            <person name="Eom C.Y."/>
            <person name="Kim Y.M."/>
        </authorList>
    </citation>
    <scope>NUCLEOTIDE SEQUENCE [GENOMIC DNA]</scope>
</reference>
<name>GRPE_METSS</name>
<dbReference type="EMBL" id="AF106835">
    <property type="protein sequence ID" value="AAC95377.1"/>
    <property type="molecule type" value="Genomic_DNA"/>
</dbReference>
<dbReference type="SMR" id="Q9ZFC7"/>
<dbReference type="GO" id="GO:0005829">
    <property type="term" value="C:cytosol"/>
    <property type="evidence" value="ECO:0007669"/>
    <property type="project" value="TreeGrafter"/>
</dbReference>
<dbReference type="GO" id="GO:0000774">
    <property type="term" value="F:adenyl-nucleotide exchange factor activity"/>
    <property type="evidence" value="ECO:0007669"/>
    <property type="project" value="InterPro"/>
</dbReference>
<dbReference type="GO" id="GO:0042803">
    <property type="term" value="F:protein homodimerization activity"/>
    <property type="evidence" value="ECO:0007669"/>
    <property type="project" value="InterPro"/>
</dbReference>
<dbReference type="GO" id="GO:0051087">
    <property type="term" value="F:protein-folding chaperone binding"/>
    <property type="evidence" value="ECO:0007669"/>
    <property type="project" value="InterPro"/>
</dbReference>
<dbReference type="GO" id="GO:0051082">
    <property type="term" value="F:unfolded protein binding"/>
    <property type="evidence" value="ECO:0007669"/>
    <property type="project" value="TreeGrafter"/>
</dbReference>
<dbReference type="GO" id="GO:0006457">
    <property type="term" value="P:protein folding"/>
    <property type="evidence" value="ECO:0007669"/>
    <property type="project" value="InterPro"/>
</dbReference>
<dbReference type="CDD" id="cd00446">
    <property type="entry name" value="GrpE"/>
    <property type="match status" value="1"/>
</dbReference>
<dbReference type="Gene3D" id="3.90.20.20">
    <property type="match status" value="1"/>
</dbReference>
<dbReference type="Gene3D" id="2.30.22.10">
    <property type="entry name" value="Head domain of nucleotide exchange factor GrpE"/>
    <property type="match status" value="1"/>
</dbReference>
<dbReference type="HAMAP" id="MF_01151">
    <property type="entry name" value="GrpE"/>
    <property type="match status" value="1"/>
</dbReference>
<dbReference type="InterPro" id="IPR000740">
    <property type="entry name" value="GrpE"/>
</dbReference>
<dbReference type="InterPro" id="IPR013805">
    <property type="entry name" value="GrpE_coiled_coil"/>
</dbReference>
<dbReference type="InterPro" id="IPR009012">
    <property type="entry name" value="GrpE_head"/>
</dbReference>
<dbReference type="NCBIfam" id="NF010737">
    <property type="entry name" value="PRK14139.1"/>
    <property type="match status" value="1"/>
</dbReference>
<dbReference type="PANTHER" id="PTHR21237">
    <property type="entry name" value="GRPE PROTEIN"/>
    <property type="match status" value="1"/>
</dbReference>
<dbReference type="PANTHER" id="PTHR21237:SF23">
    <property type="entry name" value="GRPE PROTEIN HOMOLOG, MITOCHONDRIAL"/>
    <property type="match status" value="1"/>
</dbReference>
<dbReference type="Pfam" id="PF01025">
    <property type="entry name" value="GrpE"/>
    <property type="match status" value="1"/>
</dbReference>
<dbReference type="PRINTS" id="PR00773">
    <property type="entry name" value="GRPEPROTEIN"/>
</dbReference>
<dbReference type="SUPFAM" id="SSF58014">
    <property type="entry name" value="Coiled-coil domain of nucleotide exchange factor GrpE"/>
    <property type="match status" value="1"/>
</dbReference>
<dbReference type="SUPFAM" id="SSF51064">
    <property type="entry name" value="Head domain of nucleotide exchange factor GrpE"/>
    <property type="match status" value="1"/>
</dbReference>
<keyword id="KW-0143">Chaperone</keyword>
<keyword id="KW-0963">Cytoplasm</keyword>
<keyword id="KW-0346">Stress response</keyword>
<accession>Q9ZFC7</accession>